<proteinExistence type="inferred from homology"/>
<name>PG055_VARV</name>
<dbReference type="EMBL" id="L22579">
    <property type="protein sequence ID" value="AAA60783.1"/>
    <property type="molecule type" value="Genomic_DNA"/>
</dbReference>
<dbReference type="PIR" id="T28473">
    <property type="entry name" value="T28473"/>
</dbReference>
<dbReference type="RefSeq" id="NP_042079.1">
    <property type="nucleotide sequence ID" value="NC_001611.1"/>
</dbReference>
<dbReference type="SMR" id="P0DOP6"/>
<dbReference type="GeneID" id="1486571"/>
<dbReference type="KEGG" id="vg:1486571"/>
<dbReference type="Proteomes" id="UP000119805">
    <property type="component" value="Segment"/>
</dbReference>
<dbReference type="InterPro" id="IPR007027">
    <property type="entry name" value="Poxvirus_F11"/>
</dbReference>
<dbReference type="Pfam" id="PF04943">
    <property type="entry name" value="Pox_F11"/>
    <property type="match status" value="1"/>
</dbReference>
<dbReference type="PIRSF" id="PIRSF015981">
    <property type="entry name" value="VAC_F11L"/>
    <property type="match status" value="1"/>
</dbReference>
<organism>
    <name type="scientific">Variola virus</name>
    <dbReference type="NCBI Taxonomy" id="10255"/>
    <lineage>
        <taxon>Viruses</taxon>
        <taxon>Varidnaviria</taxon>
        <taxon>Bamfordvirae</taxon>
        <taxon>Nucleocytoviricota</taxon>
        <taxon>Pokkesviricetes</taxon>
        <taxon>Chitovirales</taxon>
        <taxon>Poxviridae</taxon>
        <taxon>Chordopoxvirinae</taxon>
        <taxon>Orthopoxvirus</taxon>
    </lineage>
</organism>
<gene>
    <name type="primary">OPG055</name>
    <name type="ORF">C15L</name>
    <name type="ORF">F11L</name>
</gene>
<keyword id="KW-0426">Late protein</keyword>
<evidence type="ECO:0000250" key="1">
    <source>
        <dbReference type="UniProtKB" id="Q80HX7"/>
    </source>
</evidence>
<evidence type="ECO:0000305" key="2"/>
<feature type="chain" id="PRO_0000448186" description="Protein OPG055">
    <location>
        <begin position="1"/>
        <end position="354"/>
    </location>
</feature>
<reference key="1">
    <citation type="journal article" date="1993" name="Nature">
        <title>Potential virulence determinants in terminal regions of variola smallpox virus genome.</title>
        <authorList>
            <person name="Massung R.F."/>
            <person name="Esposito J.J."/>
            <person name="Liu L.I."/>
            <person name="Qi J."/>
            <person name="Utterback T.R."/>
            <person name="Knight J.C."/>
            <person name="Aubin L."/>
            <person name="Yuran T.E."/>
            <person name="Parsons J.M."/>
            <person name="Loparev V.N."/>
            <person name="Selivanov N.A."/>
            <person name="Cavallaro K.F."/>
            <person name="Kerlavage A.R."/>
            <person name="Mahy B.W.J."/>
            <person name="Venter J.C."/>
        </authorList>
    </citation>
    <scope>NUCLEOTIDE SEQUENCE [GENOMIC DNA]</scope>
    <source>
        <strain>Bangladesh-1975</strain>
    </source>
</reference>
<comment type="function">
    <text evidence="1">Stimulates increases in peripheral microtubule dynamics and may increase the motility of the infected cells, contributing to cell-to-cell spread of the virus. Seems to inhibit the signaling via the GTPase RHOA and DIAPH1/mDia.</text>
</comment>
<comment type="induction">
    <text evidence="1">Expressed in the late phase of the viral replicative cycle.</text>
</comment>
<comment type="similarity">
    <text evidence="2">Belongs to the orthopoxvirus OPG055 family.</text>
</comment>
<protein>
    <recommendedName>
        <fullName>Protein OPG055</fullName>
    </recommendedName>
    <alternativeName>
        <fullName>Protein F11</fullName>
    </alternativeName>
</protein>
<sequence>MGFCIPLRLKMLKRGSRKFSSMLARRHTPKKMNIVTDLENRLKKNSYIENTNQGNILMDSIFVSTMSVETLFGSYITDDSDDYELKDLLNVTYNIKPVIVPDIKLDAVLDRDGNFRPADCFLVKLKHRDGFTKGALYLGHSAGFTATICLKNEGVSGLYIPGTSVIRTNICQGDTIVSRSSRGVQFLLQIGGEAIFLIVSLCPTKKLVETGFVIPNISSNDNAKIAARILSEKRKDTITHIDTLIQYGQQLELAYYNSCMLTEFLHYCNLYANTIKESLLKETIQKDINITHTNITTLLNETAKVIKLVKSLVDKEDTDIVNNFITKEIKNCGGVKNRDTIVNSLSLSNLDFYL</sequence>
<organismHost>
    <name type="scientific">Homo sapiens</name>
    <name type="common">Human</name>
    <dbReference type="NCBI Taxonomy" id="9606"/>
</organismHost>
<accession>P0DOP6</accession>
<accession>P33870</accession>